<proteinExistence type="inferred from homology"/>
<keyword id="KW-0997">Cell inner membrane</keyword>
<keyword id="KW-1003">Cell membrane</keyword>
<keyword id="KW-0378">Hydrolase</keyword>
<keyword id="KW-0472">Membrane</keyword>
<keyword id="KW-0479">Metal-binding</keyword>
<keyword id="KW-0482">Metalloprotease</keyword>
<keyword id="KW-0645">Protease</keyword>
<keyword id="KW-0812">Transmembrane</keyword>
<keyword id="KW-1133">Transmembrane helix</keyword>
<keyword id="KW-0862">Zinc</keyword>
<protein>
    <recommendedName>
        <fullName evidence="1">Protease HtpX homolog</fullName>
        <ecNumber evidence="1">3.4.24.-</ecNumber>
    </recommendedName>
</protein>
<organism>
    <name type="scientific">Neisseria meningitidis serogroup C / serotype 2a (strain ATCC 700532 / DSM 15464 / FAM18)</name>
    <dbReference type="NCBI Taxonomy" id="272831"/>
    <lineage>
        <taxon>Bacteria</taxon>
        <taxon>Pseudomonadati</taxon>
        <taxon>Pseudomonadota</taxon>
        <taxon>Betaproteobacteria</taxon>
        <taxon>Neisseriales</taxon>
        <taxon>Neisseriaceae</taxon>
        <taxon>Neisseria</taxon>
    </lineage>
</organism>
<evidence type="ECO:0000255" key="1">
    <source>
        <dbReference type="HAMAP-Rule" id="MF_00188"/>
    </source>
</evidence>
<reference key="1">
    <citation type="journal article" date="2007" name="PLoS Genet.">
        <title>Meningococcal genetic variation mechanisms viewed through comparative analysis of serogroup C strain FAM18.</title>
        <authorList>
            <person name="Bentley S.D."/>
            <person name="Vernikos G.S."/>
            <person name="Snyder L.A.S."/>
            <person name="Churcher C."/>
            <person name="Arrowsmith C."/>
            <person name="Chillingworth T."/>
            <person name="Cronin A."/>
            <person name="Davis P.H."/>
            <person name="Holroyd N.E."/>
            <person name="Jagels K."/>
            <person name="Maddison M."/>
            <person name="Moule S."/>
            <person name="Rabbinowitsch E."/>
            <person name="Sharp S."/>
            <person name="Unwin L."/>
            <person name="Whitehead S."/>
            <person name="Quail M.A."/>
            <person name="Achtman M."/>
            <person name="Barrell B.G."/>
            <person name="Saunders N.J."/>
            <person name="Parkhill J."/>
        </authorList>
    </citation>
    <scope>NUCLEOTIDE SEQUENCE [LARGE SCALE GENOMIC DNA]</scope>
    <source>
        <strain>ATCC 700532 / DSM 15464 / FAM18</strain>
    </source>
</reference>
<accession>A1KT72</accession>
<feature type="chain" id="PRO_1000020897" description="Protease HtpX homolog">
    <location>
        <begin position="1"/>
        <end position="279"/>
    </location>
</feature>
<feature type="transmembrane region" description="Helical" evidence="1">
    <location>
        <begin position="4"/>
        <end position="24"/>
    </location>
</feature>
<feature type="transmembrane region" description="Helical" evidence="1">
    <location>
        <begin position="34"/>
        <end position="54"/>
    </location>
</feature>
<feature type="transmembrane region" description="Helical" evidence="1">
    <location>
        <begin position="155"/>
        <end position="175"/>
    </location>
</feature>
<feature type="transmembrane region" description="Helical" evidence="1">
    <location>
        <begin position="189"/>
        <end position="209"/>
    </location>
</feature>
<feature type="active site" evidence="1">
    <location>
        <position position="141"/>
    </location>
</feature>
<feature type="binding site" evidence="1">
    <location>
        <position position="140"/>
    </location>
    <ligand>
        <name>Zn(2+)</name>
        <dbReference type="ChEBI" id="CHEBI:29105"/>
        <note>catalytic</note>
    </ligand>
</feature>
<feature type="binding site" evidence="1">
    <location>
        <position position="144"/>
    </location>
    <ligand>
        <name>Zn(2+)</name>
        <dbReference type="ChEBI" id="CHEBI:29105"/>
        <note>catalytic</note>
    </ligand>
</feature>
<feature type="binding site" evidence="1">
    <location>
        <position position="215"/>
    </location>
    <ligand>
        <name>Zn(2+)</name>
        <dbReference type="ChEBI" id="CHEBI:29105"/>
        <note>catalytic</note>
    </ligand>
</feature>
<name>HTPX_NEIMF</name>
<gene>
    <name evidence="1" type="primary">htpX</name>
    <name type="ordered locus">NMC0766</name>
</gene>
<dbReference type="EC" id="3.4.24.-" evidence="1"/>
<dbReference type="EMBL" id="AM421808">
    <property type="protein sequence ID" value="CAM10054.1"/>
    <property type="molecule type" value="Genomic_DNA"/>
</dbReference>
<dbReference type="RefSeq" id="WP_002219495.1">
    <property type="nucleotide sequence ID" value="NC_008767.1"/>
</dbReference>
<dbReference type="SMR" id="A1KT72"/>
<dbReference type="MEROPS" id="M48.002"/>
<dbReference type="KEGG" id="nmc:NMC0766"/>
<dbReference type="HOGENOM" id="CLU_042266_1_0_4"/>
<dbReference type="Proteomes" id="UP000002286">
    <property type="component" value="Chromosome"/>
</dbReference>
<dbReference type="GO" id="GO:0005886">
    <property type="term" value="C:plasma membrane"/>
    <property type="evidence" value="ECO:0007669"/>
    <property type="project" value="UniProtKB-SubCell"/>
</dbReference>
<dbReference type="GO" id="GO:0004222">
    <property type="term" value="F:metalloendopeptidase activity"/>
    <property type="evidence" value="ECO:0007669"/>
    <property type="project" value="UniProtKB-UniRule"/>
</dbReference>
<dbReference type="GO" id="GO:0008270">
    <property type="term" value="F:zinc ion binding"/>
    <property type="evidence" value="ECO:0007669"/>
    <property type="project" value="UniProtKB-UniRule"/>
</dbReference>
<dbReference type="GO" id="GO:0006508">
    <property type="term" value="P:proteolysis"/>
    <property type="evidence" value="ECO:0007669"/>
    <property type="project" value="UniProtKB-KW"/>
</dbReference>
<dbReference type="CDD" id="cd07335">
    <property type="entry name" value="M48B_HtpX_like"/>
    <property type="match status" value="1"/>
</dbReference>
<dbReference type="Gene3D" id="3.30.2010.10">
    <property type="entry name" value="Metalloproteases ('zincins'), catalytic domain"/>
    <property type="match status" value="1"/>
</dbReference>
<dbReference type="HAMAP" id="MF_00188">
    <property type="entry name" value="Pept_M48_protease_HtpX"/>
    <property type="match status" value="1"/>
</dbReference>
<dbReference type="InterPro" id="IPR050083">
    <property type="entry name" value="HtpX_protease"/>
</dbReference>
<dbReference type="InterPro" id="IPR022919">
    <property type="entry name" value="Pept_M48_protease_HtpX"/>
</dbReference>
<dbReference type="InterPro" id="IPR001915">
    <property type="entry name" value="Peptidase_M48"/>
</dbReference>
<dbReference type="NCBIfam" id="NF003965">
    <property type="entry name" value="PRK05457.1"/>
    <property type="match status" value="1"/>
</dbReference>
<dbReference type="PANTHER" id="PTHR43221">
    <property type="entry name" value="PROTEASE HTPX"/>
    <property type="match status" value="1"/>
</dbReference>
<dbReference type="PANTHER" id="PTHR43221:SF1">
    <property type="entry name" value="PROTEASE HTPX"/>
    <property type="match status" value="1"/>
</dbReference>
<dbReference type="Pfam" id="PF01435">
    <property type="entry name" value="Peptidase_M48"/>
    <property type="match status" value="1"/>
</dbReference>
<dbReference type="PROSITE" id="PS00142">
    <property type="entry name" value="ZINC_PROTEASE"/>
    <property type="match status" value="1"/>
</dbReference>
<sequence>MKRIFLFLATNIAVLVVINIVLAVLGINSRGGTGSLLAYSAVVGFTGSIISLLMSKFIAKQSVGAEVIDTPRTEEEAWLLNTVEAQARQWNLKTPEVAIYHSPEPNAFATGASRNSSLIAVSTGLLDHMTRDEVEAVLAHEMAHVGNGDMVTLTLIQGVVNTFVVFLSRIIANLIARNNDGSQSQGTYFLVSMVFQILFGFLASLIVMWFSRQREYRADAGAAKLVGAPKMISALQRLKGNPVDLPEEMNAMGIAGDTRDSLLSTHPSLDNRIARLKSL</sequence>
<comment type="cofactor">
    <cofactor evidence="1">
        <name>Zn(2+)</name>
        <dbReference type="ChEBI" id="CHEBI:29105"/>
    </cofactor>
    <text evidence="1">Binds 1 zinc ion per subunit.</text>
</comment>
<comment type="subcellular location">
    <subcellularLocation>
        <location evidence="1">Cell inner membrane</location>
        <topology evidence="1">Multi-pass membrane protein</topology>
    </subcellularLocation>
</comment>
<comment type="similarity">
    <text evidence="1">Belongs to the peptidase M48B family.</text>
</comment>